<gene>
    <name evidence="1" type="primary">acpS</name>
    <name type="ordered locus">Abu_0217</name>
</gene>
<organism>
    <name type="scientific">Aliarcobacter butzleri (strain RM4018)</name>
    <name type="common">Arcobacter butzleri</name>
    <dbReference type="NCBI Taxonomy" id="367737"/>
    <lineage>
        <taxon>Bacteria</taxon>
        <taxon>Pseudomonadati</taxon>
        <taxon>Campylobacterota</taxon>
        <taxon>Epsilonproteobacteria</taxon>
        <taxon>Campylobacterales</taxon>
        <taxon>Arcobacteraceae</taxon>
        <taxon>Aliarcobacter</taxon>
    </lineage>
</organism>
<sequence length="118" mass="13116">MIGIDITSTDRIKKMYEKFGDKFYEKFLNPDEIELIKKPETAAGFWAAKEAASKAIGTGIGGSCSFHDIKIKKDALGAPKIKYKKEIRKKFGIKKSHLTITHDAGFAIAVVVNVLKKK</sequence>
<reference key="1">
    <citation type="journal article" date="2007" name="PLoS ONE">
        <title>The complete genome sequence and analysis of the Epsilonproteobacterium Arcobacter butzleri.</title>
        <authorList>
            <person name="Miller W.G."/>
            <person name="Parker C.T."/>
            <person name="Rubenfield M."/>
            <person name="Mendz G.L."/>
            <person name="Woesten M.M.S.M."/>
            <person name="Ussery D.W."/>
            <person name="Stolz J.F."/>
            <person name="Binnewies T.T."/>
            <person name="Hallin P.F."/>
            <person name="Wang G."/>
            <person name="Malek J.A."/>
            <person name="Rogosin A."/>
            <person name="Stanker L.H."/>
            <person name="Mandrell R.E."/>
        </authorList>
    </citation>
    <scope>NUCLEOTIDE SEQUENCE [LARGE SCALE GENOMIC DNA]</scope>
    <source>
        <strain>RM4018</strain>
    </source>
</reference>
<keyword id="KW-0963">Cytoplasm</keyword>
<keyword id="KW-0275">Fatty acid biosynthesis</keyword>
<keyword id="KW-0276">Fatty acid metabolism</keyword>
<keyword id="KW-0444">Lipid biosynthesis</keyword>
<keyword id="KW-0443">Lipid metabolism</keyword>
<keyword id="KW-0460">Magnesium</keyword>
<keyword id="KW-0479">Metal-binding</keyword>
<keyword id="KW-1185">Reference proteome</keyword>
<keyword id="KW-0808">Transferase</keyword>
<name>ACPS_ALIB4</name>
<evidence type="ECO:0000255" key="1">
    <source>
        <dbReference type="HAMAP-Rule" id="MF_00101"/>
    </source>
</evidence>
<comment type="function">
    <text evidence="1">Transfers the 4'-phosphopantetheine moiety from coenzyme A to a Ser of acyl-carrier-protein.</text>
</comment>
<comment type="catalytic activity">
    <reaction evidence="1">
        <text>apo-[ACP] + CoA = holo-[ACP] + adenosine 3',5'-bisphosphate + H(+)</text>
        <dbReference type="Rhea" id="RHEA:12068"/>
        <dbReference type="Rhea" id="RHEA-COMP:9685"/>
        <dbReference type="Rhea" id="RHEA-COMP:9690"/>
        <dbReference type="ChEBI" id="CHEBI:15378"/>
        <dbReference type="ChEBI" id="CHEBI:29999"/>
        <dbReference type="ChEBI" id="CHEBI:57287"/>
        <dbReference type="ChEBI" id="CHEBI:58343"/>
        <dbReference type="ChEBI" id="CHEBI:64479"/>
        <dbReference type="EC" id="2.7.8.7"/>
    </reaction>
</comment>
<comment type="cofactor">
    <cofactor evidence="1">
        <name>Mg(2+)</name>
        <dbReference type="ChEBI" id="CHEBI:18420"/>
    </cofactor>
</comment>
<comment type="subcellular location">
    <subcellularLocation>
        <location evidence="1">Cytoplasm</location>
    </subcellularLocation>
</comment>
<comment type="similarity">
    <text evidence="1">Belongs to the P-Pant transferase superfamily. AcpS family.</text>
</comment>
<feature type="chain" id="PRO_1000057666" description="Holo-[acyl-carrier-protein] synthase">
    <location>
        <begin position="1"/>
        <end position="118"/>
    </location>
</feature>
<feature type="binding site" evidence="1">
    <location>
        <position position="5"/>
    </location>
    <ligand>
        <name>Mg(2+)</name>
        <dbReference type="ChEBI" id="CHEBI:18420"/>
    </ligand>
</feature>
<feature type="binding site" evidence="1">
    <location>
        <position position="50"/>
    </location>
    <ligand>
        <name>Mg(2+)</name>
        <dbReference type="ChEBI" id="CHEBI:18420"/>
    </ligand>
</feature>
<accession>A8ERC0</accession>
<protein>
    <recommendedName>
        <fullName evidence="1">Holo-[acyl-carrier-protein] synthase</fullName>
        <shortName evidence="1">Holo-ACP synthase</shortName>
        <ecNumber evidence="1">2.7.8.7</ecNumber>
    </recommendedName>
    <alternativeName>
        <fullName evidence="1">4'-phosphopantetheinyl transferase AcpS</fullName>
    </alternativeName>
</protein>
<proteinExistence type="inferred from homology"/>
<dbReference type="EC" id="2.7.8.7" evidence="1"/>
<dbReference type="EMBL" id="CP000361">
    <property type="protein sequence ID" value="ABV66494.1"/>
    <property type="molecule type" value="Genomic_DNA"/>
</dbReference>
<dbReference type="RefSeq" id="WP_012012088.1">
    <property type="nucleotide sequence ID" value="NC_009850.1"/>
</dbReference>
<dbReference type="SMR" id="A8ERC0"/>
<dbReference type="STRING" id="367737.Abu_0217"/>
<dbReference type="GeneID" id="24304401"/>
<dbReference type="KEGG" id="abu:Abu_0217"/>
<dbReference type="eggNOG" id="COG0736">
    <property type="taxonomic scope" value="Bacteria"/>
</dbReference>
<dbReference type="HOGENOM" id="CLU_089696_0_2_7"/>
<dbReference type="Proteomes" id="UP000001136">
    <property type="component" value="Chromosome"/>
</dbReference>
<dbReference type="GO" id="GO:0005737">
    <property type="term" value="C:cytoplasm"/>
    <property type="evidence" value="ECO:0007669"/>
    <property type="project" value="UniProtKB-SubCell"/>
</dbReference>
<dbReference type="GO" id="GO:0008897">
    <property type="term" value="F:holo-[acyl-carrier-protein] synthase activity"/>
    <property type="evidence" value="ECO:0007669"/>
    <property type="project" value="UniProtKB-UniRule"/>
</dbReference>
<dbReference type="GO" id="GO:0000287">
    <property type="term" value="F:magnesium ion binding"/>
    <property type="evidence" value="ECO:0007669"/>
    <property type="project" value="UniProtKB-UniRule"/>
</dbReference>
<dbReference type="GO" id="GO:0006633">
    <property type="term" value="P:fatty acid biosynthetic process"/>
    <property type="evidence" value="ECO:0007669"/>
    <property type="project" value="UniProtKB-UniRule"/>
</dbReference>
<dbReference type="Gene3D" id="3.90.470.20">
    <property type="entry name" value="4'-phosphopantetheinyl transferase domain"/>
    <property type="match status" value="1"/>
</dbReference>
<dbReference type="HAMAP" id="MF_00101">
    <property type="entry name" value="AcpS"/>
    <property type="match status" value="1"/>
</dbReference>
<dbReference type="InterPro" id="IPR008278">
    <property type="entry name" value="4-PPantetheinyl_Trfase_dom"/>
</dbReference>
<dbReference type="InterPro" id="IPR037143">
    <property type="entry name" value="4-PPantetheinyl_Trfase_dom_sf"/>
</dbReference>
<dbReference type="InterPro" id="IPR002582">
    <property type="entry name" value="ACPS"/>
</dbReference>
<dbReference type="InterPro" id="IPR004568">
    <property type="entry name" value="Ppantetheine-prot_Trfase_dom"/>
</dbReference>
<dbReference type="NCBIfam" id="TIGR00516">
    <property type="entry name" value="acpS"/>
    <property type="match status" value="1"/>
</dbReference>
<dbReference type="NCBIfam" id="TIGR00556">
    <property type="entry name" value="pantethn_trn"/>
    <property type="match status" value="1"/>
</dbReference>
<dbReference type="Pfam" id="PF01648">
    <property type="entry name" value="ACPS"/>
    <property type="match status" value="1"/>
</dbReference>
<dbReference type="SUPFAM" id="SSF56214">
    <property type="entry name" value="4'-phosphopantetheinyl transferase"/>
    <property type="match status" value="1"/>
</dbReference>